<evidence type="ECO:0000250" key="1">
    <source>
        <dbReference type="UniProtKB" id="Q6ZMH5"/>
    </source>
</evidence>
<evidence type="ECO:0000255" key="2"/>
<evidence type="ECO:0000256" key="3">
    <source>
        <dbReference type="SAM" id="MobiDB-lite"/>
    </source>
</evidence>
<evidence type="ECO:0000269" key="4">
    <source>
    </source>
</evidence>
<evidence type="ECO:0000269" key="5">
    <source>
    </source>
</evidence>
<evidence type="ECO:0000269" key="6">
    <source>
    </source>
</evidence>
<evidence type="ECO:0000269" key="7">
    <source>
    </source>
</evidence>
<evidence type="ECO:0000269" key="8">
    <source>
    </source>
</evidence>
<evidence type="ECO:0000269" key="9">
    <source>
    </source>
</evidence>
<evidence type="ECO:0000269" key="10">
    <source>
    </source>
</evidence>
<evidence type="ECO:0000303" key="11">
    <source>
    </source>
</evidence>
<evidence type="ECO:0000305" key="12"/>
<evidence type="ECO:0000305" key="13">
    <source>
    </source>
</evidence>
<evidence type="ECO:0000312" key="14">
    <source>
        <dbReference type="MGI" id="MGI:1919336"/>
    </source>
</evidence>
<evidence type="ECO:0007744" key="15">
    <source>
    </source>
</evidence>
<accession>Q9D856</accession>
<accession>Q9D909</accession>
<reference key="1">
    <citation type="journal article" date="2005" name="Science">
        <title>The transcriptional landscape of the mammalian genome.</title>
        <authorList>
            <person name="Carninci P."/>
            <person name="Kasukawa T."/>
            <person name="Katayama S."/>
            <person name="Gough J."/>
            <person name="Frith M.C."/>
            <person name="Maeda N."/>
            <person name="Oyama R."/>
            <person name="Ravasi T."/>
            <person name="Lenhard B."/>
            <person name="Wells C."/>
            <person name="Kodzius R."/>
            <person name="Shimokawa K."/>
            <person name="Bajic V.B."/>
            <person name="Brenner S.E."/>
            <person name="Batalov S."/>
            <person name="Forrest A.R."/>
            <person name="Zavolan M."/>
            <person name="Davis M.J."/>
            <person name="Wilming L.G."/>
            <person name="Aidinis V."/>
            <person name="Allen J.E."/>
            <person name="Ambesi-Impiombato A."/>
            <person name="Apweiler R."/>
            <person name="Aturaliya R.N."/>
            <person name="Bailey T.L."/>
            <person name="Bansal M."/>
            <person name="Baxter L."/>
            <person name="Beisel K.W."/>
            <person name="Bersano T."/>
            <person name="Bono H."/>
            <person name="Chalk A.M."/>
            <person name="Chiu K.P."/>
            <person name="Choudhary V."/>
            <person name="Christoffels A."/>
            <person name="Clutterbuck D.R."/>
            <person name="Crowe M.L."/>
            <person name="Dalla E."/>
            <person name="Dalrymple B.P."/>
            <person name="de Bono B."/>
            <person name="Della Gatta G."/>
            <person name="di Bernardo D."/>
            <person name="Down T."/>
            <person name="Engstrom P."/>
            <person name="Fagiolini M."/>
            <person name="Faulkner G."/>
            <person name="Fletcher C.F."/>
            <person name="Fukushima T."/>
            <person name="Furuno M."/>
            <person name="Futaki S."/>
            <person name="Gariboldi M."/>
            <person name="Georgii-Hemming P."/>
            <person name="Gingeras T.R."/>
            <person name="Gojobori T."/>
            <person name="Green R.E."/>
            <person name="Gustincich S."/>
            <person name="Harbers M."/>
            <person name="Hayashi Y."/>
            <person name="Hensch T.K."/>
            <person name="Hirokawa N."/>
            <person name="Hill D."/>
            <person name="Huminiecki L."/>
            <person name="Iacono M."/>
            <person name="Ikeo K."/>
            <person name="Iwama A."/>
            <person name="Ishikawa T."/>
            <person name="Jakt M."/>
            <person name="Kanapin A."/>
            <person name="Katoh M."/>
            <person name="Kawasawa Y."/>
            <person name="Kelso J."/>
            <person name="Kitamura H."/>
            <person name="Kitano H."/>
            <person name="Kollias G."/>
            <person name="Krishnan S.P."/>
            <person name="Kruger A."/>
            <person name="Kummerfeld S.K."/>
            <person name="Kurochkin I.V."/>
            <person name="Lareau L.F."/>
            <person name="Lazarevic D."/>
            <person name="Lipovich L."/>
            <person name="Liu J."/>
            <person name="Liuni S."/>
            <person name="McWilliam S."/>
            <person name="Madan Babu M."/>
            <person name="Madera M."/>
            <person name="Marchionni L."/>
            <person name="Matsuda H."/>
            <person name="Matsuzawa S."/>
            <person name="Miki H."/>
            <person name="Mignone F."/>
            <person name="Miyake S."/>
            <person name="Morris K."/>
            <person name="Mottagui-Tabar S."/>
            <person name="Mulder N."/>
            <person name="Nakano N."/>
            <person name="Nakauchi H."/>
            <person name="Ng P."/>
            <person name="Nilsson R."/>
            <person name="Nishiguchi S."/>
            <person name="Nishikawa S."/>
            <person name="Nori F."/>
            <person name="Ohara O."/>
            <person name="Okazaki Y."/>
            <person name="Orlando V."/>
            <person name="Pang K.C."/>
            <person name="Pavan W.J."/>
            <person name="Pavesi G."/>
            <person name="Pesole G."/>
            <person name="Petrovsky N."/>
            <person name="Piazza S."/>
            <person name="Reed J."/>
            <person name="Reid J.F."/>
            <person name="Ring B.Z."/>
            <person name="Ringwald M."/>
            <person name="Rost B."/>
            <person name="Ruan Y."/>
            <person name="Salzberg S.L."/>
            <person name="Sandelin A."/>
            <person name="Schneider C."/>
            <person name="Schoenbach C."/>
            <person name="Sekiguchi K."/>
            <person name="Semple C.A."/>
            <person name="Seno S."/>
            <person name="Sessa L."/>
            <person name="Sheng Y."/>
            <person name="Shibata Y."/>
            <person name="Shimada H."/>
            <person name="Shimada K."/>
            <person name="Silva D."/>
            <person name="Sinclair B."/>
            <person name="Sperling S."/>
            <person name="Stupka E."/>
            <person name="Sugiura K."/>
            <person name="Sultana R."/>
            <person name="Takenaka Y."/>
            <person name="Taki K."/>
            <person name="Tammoja K."/>
            <person name="Tan S.L."/>
            <person name="Tang S."/>
            <person name="Taylor M.S."/>
            <person name="Tegner J."/>
            <person name="Teichmann S.A."/>
            <person name="Ueda H.R."/>
            <person name="van Nimwegen E."/>
            <person name="Verardo R."/>
            <person name="Wei C.L."/>
            <person name="Yagi K."/>
            <person name="Yamanishi H."/>
            <person name="Zabarovsky E."/>
            <person name="Zhu S."/>
            <person name="Zimmer A."/>
            <person name="Hide W."/>
            <person name="Bult C."/>
            <person name="Grimmond S.M."/>
            <person name="Teasdale R.D."/>
            <person name="Liu E.T."/>
            <person name="Brusic V."/>
            <person name="Quackenbush J."/>
            <person name="Wahlestedt C."/>
            <person name="Mattick J.S."/>
            <person name="Hume D.A."/>
            <person name="Kai C."/>
            <person name="Sasaki D."/>
            <person name="Tomaru Y."/>
            <person name="Fukuda S."/>
            <person name="Kanamori-Katayama M."/>
            <person name="Suzuki M."/>
            <person name="Aoki J."/>
            <person name="Arakawa T."/>
            <person name="Iida J."/>
            <person name="Imamura K."/>
            <person name="Itoh M."/>
            <person name="Kato T."/>
            <person name="Kawaji H."/>
            <person name="Kawagashira N."/>
            <person name="Kawashima T."/>
            <person name="Kojima M."/>
            <person name="Kondo S."/>
            <person name="Konno H."/>
            <person name="Nakano K."/>
            <person name="Ninomiya N."/>
            <person name="Nishio T."/>
            <person name="Okada M."/>
            <person name="Plessy C."/>
            <person name="Shibata K."/>
            <person name="Shiraki T."/>
            <person name="Suzuki S."/>
            <person name="Tagami M."/>
            <person name="Waki K."/>
            <person name="Watahiki A."/>
            <person name="Okamura-Oho Y."/>
            <person name="Suzuki H."/>
            <person name="Kawai J."/>
            <person name="Hayashizaki Y."/>
        </authorList>
    </citation>
    <scope>NUCLEOTIDE SEQUENCE [LARGE SCALE MRNA]</scope>
    <source>
        <strain>C57BL/6J</strain>
        <tissue>Pancreas</tissue>
        <tissue>Small intestine</tissue>
    </source>
</reference>
<reference key="2">
    <citation type="journal article" date="2004" name="Genome Res.">
        <title>The status, quality, and expansion of the NIH full-length cDNA project: the Mammalian Gene Collection (MGC).</title>
        <authorList>
            <consortium name="The MGC Project Team"/>
        </authorList>
    </citation>
    <scope>NUCLEOTIDE SEQUENCE [LARGE SCALE MRNA]</scope>
    <source>
        <strain>FVB/N</strain>
        <tissue>Kidney</tissue>
    </source>
</reference>
<reference key="3">
    <citation type="journal article" date="2004" name="J. Biol. Chem.">
        <title>The adaptive response to dietary zinc in mice involves the differential cellular localization and zinc regulation of the zinc transporters ZIP4 and ZIP5.</title>
        <authorList>
            <person name="Dufner-Beattie J."/>
            <person name="Kuo Y.M."/>
            <person name="Gitschier J."/>
            <person name="Andrews G.K."/>
        </authorList>
    </citation>
    <scope>TISSUE SPECIFICITY</scope>
    <scope>SUBCELLULAR LOCATION</scope>
</reference>
<reference key="4">
    <citation type="journal article" date="2004" name="J. Biol. Chem.">
        <title>The mammalian Zip5 protein is a zinc transporter that localizes to the basolateral surface of polarized cells.</title>
        <authorList>
            <person name="Wang F."/>
            <person name="Kim B.-E."/>
            <person name="Petris M.J."/>
            <person name="Eide D.J."/>
        </authorList>
    </citation>
    <scope>FUNCTION</scope>
    <scope>TRANSPORTER ACTIVITY</scope>
    <scope>TOPOLOGY</scope>
    <scope>GLYCOSYLATION</scope>
    <scope>SUBCELLULAR LOCATION</scope>
</reference>
<reference key="5">
    <citation type="journal article" date="2007" name="Biol. Chem.">
        <title>Novel zinc-responsive post-transcriptional mechanisms reciprocally regulate expression of the mouse Slc39a4 and Slc39a5 zinc transporters (Zip4 and Zip5).</title>
        <authorList>
            <person name="Weaver B.P."/>
            <person name="Dufner-Beattie J."/>
            <person name="Kambe T."/>
            <person name="Andrews G.K."/>
        </authorList>
    </citation>
    <scope>SUBCELLULAR LOCATION</scope>
    <scope>INDUCTION</scope>
</reference>
<reference key="6">
    <citation type="journal article" date="2010" name="Cell">
        <title>A tissue-specific atlas of mouse protein phosphorylation and expression.</title>
        <authorList>
            <person name="Huttlin E.L."/>
            <person name="Jedrychowski M.P."/>
            <person name="Elias J.E."/>
            <person name="Goswami T."/>
            <person name="Rad R."/>
            <person name="Beausoleil S.A."/>
            <person name="Villen J."/>
            <person name="Haas W."/>
            <person name="Sowa M.E."/>
            <person name="Gygi S.P."/>
        </authorList>
    </citation>
    <scope>PHOSPHORYLATION [LARGE SCALE ANALYSIS] AT SER-333</scope>
    <scope>IDENTIFICATION BY MASS SPECTROMETRY [LARGE SCALE ANALYSIS]</scope>
    <source>
        <tissue>Pancreas</tissue>
    </source>
</reference>
<reference key="7">
    <citation type="journal article" date="2013" name="PLoS ONE">
        <title>The ZIP5 ectodomain co-localizes with PrP and may acquire a PrP-like fold that assembles into a dimer.</title>
        <authorList>
            <person name="Pocanschi C.L."/>
            <person name="Ehsani S."/>
            <person name="Mehrabian M."/>
            <person name="Wille H."/>
            <person name="Reginold W."/>
            <person name="Trimble W.S."/>
            <person name="Wang H."/>
            <person name="Yee A."/>
            <person name="Arrowsmith C.H."/>
            <person name="Bozoky Z."/>
            <person name="Kay L.E."/>
            <person name="Forman-Kay J.D."/>
            <person name="Rini J.M."/>
            <person name="Schmitt-Ulms G."/>
        </authorList>
    </citation>
    <scope>SUBCELLULAR LOCATION</scope>
    <scope>GLYCOSYLATION</scope>
    <scope>SUBUNIT</scope>
</reference>
<reference key="8">
    <citation type="journal article" date="2013" name="PLoS ONE">
        <title>The zinc transporter Zip5 (Slc39a5) regulates intestinal zinc excretion and protects the pancreas against zinc toxicity.</title>
        <authorList>
            <person name="Geiser J."/>
            <person name="De Lisle R.C."/>
            <person name="Andrews G.K."/>
        </authorList>
    </citation>
    <scope>FUNCTION</scope>
    <scope>TRANSPORTER ACTIVITY</scope>
    <scope>DISRUPTION PHENOTYPE</scope>
</reference>
<reference key="9">
    <citation type="journal article" date="2014" name="J. Med. Genet.">
        <title>SLC39A5 mutations interfering with the BMP/TGF-beta pathway in non-syndromic high myopia.</title>
        <authorList>
            <person name="Guo H."/>
            <person name="Jin X."/>
            <person name="Zhu T."/>
            <person name="Wang T."/>
            <person name="Tong P."/>
            <person name="Tian L."/>
            <person name="Peng Y."/>
            <person name="Sun L."/>
            <person name="Wan A."/>
            <person name="Chen J."/>
            <person name="Liu Y."/>
            <person name="Li Y."/>
            <person name="Tian Q."/>
            <person name="Xia L."/>
            <person name="Zhang L."/>
            <person name="Pan Y."/>
            <person name="Lu L."/>
            <person name="Liu Q."/>
            <person name="Shen L."/>
            <person name="Li Y."/>
            <person name="Xiong W."/>
            <person name="Li J."/>
            <person name="Tang B."/>
            <person name="Feng Y."/>
            <person name="Zhang X."/>
            <person name="Zhang Z."/>
            <person name="Pan Q."/>
            <person name="Hu Z."/>
            <person name="Xia K."/>
        </authorList>
    </citation>
    <scope>DEVELOPMENTAL STAGE</scope>
    <scope>TISSUE SPECIFICITY</scope>
</reference>
<reference key="10">
    <citation type="journal article" date="2019" name="Protein Cell">
        <title>The zinc transporter Slc39a5 controls glucose sensing and insulin secretion in pancreatic beta-cells via Sirt1- and Pgc-1alpha-mediated regulation of Glut2.</title>
        <authorList>
            <person name="Wang X."/>
            <person name="Gao H."/>
            <person name="Wu W."/>
            <person name="Xie E."/>
            <person name="Yu Y."/>
            <person name="He X."/>
            <person name="Li J."/>
            <person name="Zheng W."/>
            <person name="Wang X."/>
            <person name="Cao X."/>
            <person name="Meng Z."/>
            <person name="Chen L."/>
            <person name="Min J."/>
            <person name="Wang F."/>
        </authorList>
    </citation>
    <scope>FUNCTION</scope>
</reference>
<proteinExistence type="evidence at protein level"/>
<name>S39A5_MOUSE</name>
<keyword id="KW-1003">Cell membrane</keyword>
<keyword id="KW-0325">Glycoprotein</keyword>
<keyword id="KW-0406">Ion transport</keyword>
<keyword id="KW-0472">Membrane</keyword>
<keyword id="KW-0488">Methylation</keyword>
<keyword id="KW-0597">Phosphoprotein</keyword>
<keyword id="KW-1185">Reference proteome</keyword>
<keyword id="KW-0732">Signal</keyword>
<keyword id="KW-0812">Transmembrane</keyword>
<keyword id="KW-1133">Transmembrane helix</keyword>
<keyword id="KW-0813">Transport</keyword>
<keyword id="KW-0862">Zinc</keyword>
<keyword id="KW-0864">Zinc transport</keyword>
<organism>
    <name type="scientific">Mus musculus</name>
    <name type="common">Mouse</name>
    <dbReference type="NCBI Taxonomy" id="10090"/>
    <lineage>
        <taxon>Eukaryota</taxon>
        <taxon>Metazoa</taxon>
        <taxon>Chordata</taxon>
        <taxon>Craniata</taxon>
        <taxon>Vertebrata</taxon>
        <taxon>Euteleostomi</taxon>
        <taxon>Mammalia</taxon>
        <taxon>Eutheria</taxon>
        <taxon>Euarchontoglires</taxon>
        <taxon>Glires</taxon>
        <taxon>Rodentia</taxon>
        <taxon>Myomorpha</taxon>
        <taxon>Muroidea</taxon>
        <taxon>Muridae</taxon>
        <taxon>Murinae</taxon>
        <taxon>Mus</taxon>
        <taxon>Mus</taxon>
    </lineage>
</organism>
<comment type="function">
    <text evidence="1 4 8 10">Uniporter that transports zinc(2+) into polarized cells of enterocytes, pancreatic acinar and endoderm cells across the basolateral membrane and participates, notably, in zinc excretion from the intestine by the uptake of zinc from the blood into the intestine (PubMed:15322118, PubMed:24303081). The transport mechanism is temperature- and concentration-dependent and saturable (PubMed:15322118). In addition, is also a high affinity copper transporter in vitro (By similarity). Also may regulate glucose-stimulated insulin secretion (GSIS) in islets primarily through the zinc-activated SIRT1-PPARGC1A axis (PubMed:30324491). Could regulate the BMP/TGF-beta (bone morphogenetic protein/transforming growth factor-beta) signaling pathway and modulates extracellular matrix (ECM) proteins of the sclera (By similarity). Plays a role in eye development (By similarity).</text>
</comment>
<comment type="catalytic activity">
    <reaction evidence="4 8">
        <text>Zn(2+)(in) = Zn(2+)(out)</text>
        <dbReference type="Rhea" id="RHEA:29351"/>
        <dbReference type="ChEBI" id="CHEBI:29105"/>
    </reaction>
</comment>
<comment type="biophysicochemical properties">
    <kinetics>
        <KM evidence="4">1.7 uM for Zn(2+) (in HEK293 cells transfected)</KM>
        <KM evidence="4">2.1 uM for Zn(2+) (in the endogenous system in HEK293 cells)</KM>
        <Vmax evidence="4">13.2 pmol/min/mg protein towards Zn(2+) (in HEK293 cells transfected)</Vmax>
        <Vmax evidence="4">4.1 pmol/min/mg protein towards Zn(2+) (in the endogenous system in HEK293 cells)</Vmax>
    </kinetics>
</comment>
<comment type="subunit">
    <text evidence="7">Homodimer.</text>
</comment>
<comment type="subcellular location">
    <subcellularLocation>
        <location evidence="4 5 6">Basolateral cell membrane</location>
        <topology evidence="4">Multi-pass membrane protein</topology>
    </subcellularLocation>
    <text evidence="5 6 7">Localized to the basolateral surfaces of enterocytes, pancreatic acinar and endoderm cells (PubMed:15358787). During zinc deficiency diet, the basolateral cell membrane localization is lost in the intestine, the visceral yolk sac and acinar cell (PubMed:15358787). During zinc repletion, is relocalized to the basolateral membrane of enterocytes, visceral endoderm cells and pancreatic acinar cells (PubMed:18020946). Zinc can regulate the turnover of protein at the membrane (PubMed:18020946). During zinc deficiency, is internalized and degraded in enterocytes, acinar cells and endoderm cells (PubMed:18020946). Endocytosed through the endolysosomal degradation pathway RAB5A pathway (PubMed:24039764).</text>
</comment>
<comment type="tissue specificity">
    <text evidence="5 9">Expressed in all stages of eye development and primarily in the sclera and several layers of the retina, including the inner segment, outer plexiform layer and ganglion cell layer (PubMed:24891338). Expressed in pancreas, kidney and the proximal and distal small intestine as well as in the embryonic visceral yolk sac (PubMed:15358787). In the proximal intestine, expression is predominant in the crypts but diminishes toward the apical regions of the villi (PubMed:15358787).</text>
</comment>
<comment type="developmental stage">
    <text evidence="9">Expressed at 10 dpc, postnatal day P0, P13 and adult.</text>
</comment>
<comment type="induction">
    <text evidence="6">Induced in a zinc-responsive manner (PubMed:18020946). During zinc deficiency, the transcript remains associated with polysomes and is rapidly resynthesized and targeted to the basolateral membranes of these cell types after zinc-repletion (PubMed:18020946).</text>
</comment>
<comment type="PTM">
    <text evidence="4 7">N-Glycosylated.</text>
</comment>
<comment type="PTM">
    <text evidence="1">Methylated at His-371 by METTL9.</text>
</comment>
<comment type="disruption phenotype">
    <text evidence="8">Homozygous knockout mice lacking Slc39a5 display normal fecondity and seem normal.</text>
</comment>
<comment type="similarity">
    <text evidence="12">Belongs to the ZIP transporter (TC 2.A.5) family.</text>
</comment>
<feature type="signal peptide" evidence="2">
    <location>
        <begin position="1"/>
        <end position="19"/>
    </location>
</feature>
<feature type="chain" id="PRO_0000045796" description="Zinc transporter ZIP5">
    <location>
        <begin position="20"/>
        <end position="535"/>
    </location>
</feature>
<feature type="topological domain" description="Extracellular" evidence="13">
    <location>
        <begin position="20"/>
        <end position="210"/>
    </location>
</feature>
<feature type="transmembrane region" description="Helical" evidence="2">
    <location>
        <begin position="211"/>
        <end position="231"/>
    </location>
</feature>
<feature type="topological domain" description="Cytoplasmic" evidence="2">
    <location>
        <begin position="232"/>
        <end position="242"/>
    </location>
</feature>
<feature type="transmembrane region" description="Helical" evidence="2">
    <location>
        <begin position="243"/>
        <end position="263"/>
    </location>
</feature>
<feature type="topological domain" description="Extracellular" evidence="2">
    <location>
        <begin position="264"/>
        <end position="285"/>
    </location>
</feature>
<feature type="transmembrane region" description="Helical" evidence="2">
    <location>
        <begin position="286"/>
        <end position="306"/>
    </location>
</feature>
<feature type="topological domain" description="Cytoplasmic" evidence="2">
    <location>
        <begin position="307"/>
        <end position="439"/>
    </location>
</feature>
<feature type="transmembrane region" description="Helical" evidence="2">
    <location>
        <begin position="440"/>
        <end position="460"/>
    </location>
</feature>
<feature type="topological domain" description="Extracellular" evidence="2">
    <location>
        <begin position="461"/>
        <end position="465"/>
    </location>
</feature>
<feature type="transmembrane region" description="Helical" evidence="2">
    <location>
        <begin position="466"/>
        <end position="486"/>
    </location>
</feature>
<feature type="topological domain" description="Cytoplasmic" evidence="2">
    <location>
        <begin position="487"/>
        <end position="503"/>
    </location>
</feature>
<feature type="transmembrane region" description="Helical" evidence="2">
    <location>
        <begin position="504"/>
        <end position="524"/>
    </location>
</feature>
<feature type="topological domain" description="Extracellular" evidence="4">
    <location>
        <begin position="525"/>
        <end position="535"/>
    </location>
</feature>
<feature type="region of interest" description="Disordered" evidence="3">
    <location>
        <begin position="316"/>
        <end position="373"/>
    </location>
</feature>
<feature type="modified residue" description="Phosphoserine" evidence="15">
    <location>
        <position position="333"/>
    </location>
</feature>
<feature type="modified residue" description="Pros-methylhistidine" evidence="1">
    <location>
        <position position="371"/>
    </location>
</feature>
<feature type="glycosylation site" description="N-linked (GlcNAc...) asparagine" evidence="2">
    <location>
        <position position="49"/>
    </location>
</feature>
<feature type="glycosylation site" description="N-linked (GlcNAc...) asparagine" evidence="2">
    <location>
        <position position="158"/>
    </location>
</feature>
<feature type="sequence conflict" description="In Ref. 1; BAB25054." evidence="12" ref="1">
    <original>L</original>
    <variation>R</variation>
    <location>
        <position position="137"/>
    </location>
</feature>
<feature type="sequence conflict" description="In Ref. 1; BAB25054." evidence="12" ref="1">
    <original>G</original>
    <variation>V</variation>
    <location>
        <position position="332"/>
    </location>
</feature>
<sequence length="535" mass="56275">MGPPVHHLLTGLCVGVALGWVGGSVPNLGPAEQEQNHYLAQLFGLYGENGTLTAGGLARLLHSLGLGRVQGLRLGHHEPPTGRAAPTSGDNFTHRLQEPELSVDIWAGMPLGPSGWGDQEESKAPDLHGSGPSSLDLFQRLLLLDHSLADHLNEDCLNGSQLLVNFGLSPVAPLTPRQFALLCPALLYQIDSRVCIKTPAPAPPGDVLSALLHSGLAVLFLSLPAPLSLLLLRLLGPRLLRPVLGFLGALAVGTLCGDALLHLLPHAQGGRHTGPSEQSEEDLGPGLSVLGGLFLLFMLENTLGLVRHRGLRPRCCRNKRDLGEPNPDPEDGSGMVLRPLQAASEPEVQGQRENRQSSPSLAPPGHQGHSHEHRGGSIAWMVLLGDCLHNLTDGLALGAAFSDGFSSGLSTTLAVFCHELPHELGDFAMLLQEGLSFRKLLLLSLVSGALGLGGAALGVGLSLGPVPLTPWVFGTTAGVFLYVALVDMLPTLLRPPEPLPVFHVLLQGLGLLLGGSLMFTIALLEEQLVPTVPDG</sequence>
<dbReference type="EMBL" id="AK007473">
    <property type="protein sequence ID" value="BAB25054.1"/>
    <property type="molecule type" value="mRNA"/>
</dbReference>
<dbReference type="EMBL" id="AK008448">
    <property type="protein sequence ID" value="BAB25675.1"/>
    <property type="molecule type" value="mRNA"/>
</dbReference>
<dbReference type="EMBL" id="BC028990">
    <property type="protein sequence ID" value="AAH28990.1"/>
    <property type="molecule type" value="mRNA"/>
</dbReference>
<dbReference type="CCDS" id="CCDS24275.1"/>
<dbReference type="RefSeq" id="NP_001129709.1">
    <property type="nucleotide sequence ID" value="NM_001136237.1"/>
</dbReference>
<dbReference type="RefSeq" id="NP_082327.2">
    <property type="nucleotide sequence ID" value="NM_028051.3"/>
</dbReference>
<dbReference type="RefSeq" id="NP_082368.1">
    <property type="nucleotide sequence ID" value="NM_028092.3"/>
</dbReference>
<dbReference type="RefSeq" id="XP_006514235.1">
    <property type="nucleotide sequence ID" value="XM_006514172.3"/>
</dbReference>
<dbReference type="RefSeq" id="XP_006514236.1">
    <property type="nucleotide sequence ID" value="XM_006514173.3"/>
</dbReference>
<dbReference type="SMR" id="Q9D856"/>
<dbReference type="FunCoup" id="Q9D856">
    <property type="interactions" value="217"/>
</dbReference>
<dbReference type="STRING" id="10090.ENSMUSP00000131736"/>
<dbReference type="GlyCosmos" id="Q9D856">
    <property type="glycosylation" value="2 sites, No reported glycans"/>
</dbReference>
<dbReference type="GlyGen" id="Q9D856">
    <property type="glycosylation" value="2 sites"/>
</dbReference>
<dbReference type="iPTMnet" id="Q9D856"/>
<dbReference type="PhosphoSitePlus" id="Q9D856"/>
<dbReference type="PaxDb" id="10090-ENSMUSP00000131736"/>
<dbReference type="ProteomicsDB" id="256573"/>
<dbReference type="Antibodypedia" id="15788">
    <property type="antibodies" value="94 antibodies from 27 providers"/>
</dbReference>
<dbReference type="DNASU" id="72002"/>
<dbReference type="Ensembl" id="ENSMUST00000042666.13">
    <property type="protein sequence ID" value="ENSMUSP00000037753.6"/>
    <property type="gene ID" value="ENSMUSG00000039878.14"/>
</dbReference>
<dbReference type="Ensembl" id="ENSMUST00000167859.2">
    <property type="protein sequence ID" value="ENSMUSP00000131736.2"/>
    <property type="gene ID" value="ENSMUSG00000039878.14"/>
</dbReference>
<dbReference type="GeneID" id="72002"/>
<dbReference type="KEGG" id="mmu:72002"/>
<dbReference type="UCSC" id="uc007hmn.3">
    <property type="organism name" value="mouse"/>
</dbReference>
<dbReference type="AGR" id="MGI:1919336"/>
<dbReference type="CTD" id="283375"/>
<dbReference type="MGI" id="MGI:1919336">
    <property type="gene designation" value="Slc39a5"/>
</dbReference>
<dbReference type="VEuPathDB" id="HostDB:ENSMUSG00000039878"/>
<dbReference type="eggNOG" id="KOG2693">
    <property type="taxonomic scope" value="Eukaryota"/>
</dbReference>
<dbReference type="GeneTree" id="ENSGT00940000161155"/>
<dbReference type="HOGENOM" id="CLU_015114_13_2_1"/>
<dbReference type="InParanoid" id="Q9D856"/>
<dbReference type="OMA" id="GANITWM"/>
<dbReference type="OrthoDB" id="200954at2759"/>
<dbReference type="PhylomeDB" id="Q9D856"/>
<dbReference type="TreeFam" id="TF318470"/>
<dbReference type="BioGRID-ORCS" id="72002">
    <property type="hits" value="7 hits in 76 CRISPR screens"/>
</dbReference>
<dbReference type="PRO" id="PR:Q9D856"/>
<dbReference type="Proteomes" id="UP000000589">
    <property type="component" value="Chromosome 10"/>
</dbReference>
<dbReference type="RNAct" id="Q9D856">
    <property type="molecule type" value="protein"/>
</dbReference>
<dbReference type="Bgee" id="ENSMUSG00000039878">
    <property type="expression patterns" value="Expressed in yolk sac and 62 other cell types or tissues"/>
</dbReference>
<dbReference type="ExpressionAtlas" id="Q9D856">
    <property type="expression patterns" value="baseline and differential"/>
</dbReference>
<dbReference type="GO" id="GO:0016323">
    <property type="term" value="C:basolateral plasma membrane"/>
    <property type="evidence" value="ECO:0000314"/>
    <property type="project" value="UniProtKB"/>
</dbReference>
<dbReference type="GO" id="GO:0005886">
    <property type="term" value="C:plasma membrane"/>
    <property type="evidence" value="ECO:0000304"/>
    <property type="project" value="Reactome"/>
</dbReference>
<dbReference type="GO" id="GO:0005385">
    <property type="term" value="F:zinc ion transmembrane transporter activity"/>
    <property type="evidence" value="ECO:0000314"/>
    <property type="project" value="UniProtKB"/>
</dbReference>
<dbReference type="GO" id="GO:0030509">
    <property type="term" value="P:BMP signaling pathway"/>
    <property type="evidence" value="ECO:0000250"/>
    <property type="project" value="UniProtKB"/>
</dbReference>
<dbReference type="GO" id="GO:0034224">
    <property type="term" value="P:cellular response to zinc ion starvation"/>
    <property type="evidence" value="ECO:0000314"/>
    <property type="project" value="MGI"/>
</dbReference>
<dbReference type="GO" id="GO:0001654">
    <property type="term" value="P:eye development"/>
    <property type="evidence" value="ECO:0000250"/>
    <property type="project" value="UniProtKB"/>
</dbReference>
<dbReference type="GO" id="GO:0006882">
    <property type="term" value="P:intracellular zinc ion homeostasis"/>
    <property type="evidence" value="ECO:0000304"/>
    <property type="project" value="MGI"/>
</dbReference>
<dbReference type="GO" id="GO:0048026">
    <property type="term" value="P:positive regulation of mRNA splicing, via spliceosome"/>
    <property type="evidence" value="ECO:0000315"/>
    <property type="project" value="MGI"/>
</dbReference>
<dbReference type="GO" id="GO:0071577">
    <property type="term" value="P:zinc ion transmembrane transport"/>
    <property type="evidence" value="ECO:0000315"/>
    <property type="project" value="UniProtKB"/>
</dbReference>
<dbReference type="GO" id="GO:0006829">
    <property type="term" value="P:zinc ion transport"/>
    <property type="evidence" value="ECO:0000314"/>
    <property type="project" value="UniProtKB"/>
</dbReference>
<dbReference type="InterPro" id="IPR003689">
    <property type="entry name" value="ZIP"/>
</dbReference>
<dbReference type="InterPro" id="IPR050799">
    <property type="entry name" value="ZIP_Transporter"/>
</dbReference>
<dbReference type="PANTHER" id="PTHR12191">
    <property type="entry name" value="SOLUTE CARRIER FAMILY 39"/>
    <property type="match status" value="1"/>
</dbReference>
<dbReference type="PANTHER" id="PTHR12191:SF17">
    <property type="entry name" value="ZINC TRANSPORTER ZIP5"/>
    <property type="match status" value="1"/>
</dbReference>
<dbReference type="Pfam" id="PF02535">
    <property type="entry name" value="Zip"/>
    <property type="match status" value="1"/>
</dbReference>
<gene>
    <name evidence="14" type="primary">Slc39a5</name>
    <name evidence="11" type="synonym">Zip5</name>
</gene>
<protein>
    <recommendedName>
        <fullName evidence="12">Zinc transporter ZIP5</fullName>
    </recommendedName>
    <alternativeName>
        <fullName>Solute carrier family 39 member 5</fullName>
    </alternativeName>
    <alternativeName>
        <fullName evidence="11">Zrt- and Irt-like protein 5</fullName>
        <shortName evidence="11">ZIP-5</shortName>
    </alternativeName>
</protein>